<gene>
    <name type="primary">rfaL</name>
    <name type="ordered locus">RBE_0399</name>
</gene>
<protein>
    <recommendedName>
        <fullName>Putative polysaccharide ligase RBE_0399</fullName>
    </recommendedName>
</protein>
<proteinExistence type="inferred from homology"/>
<feature type="chain" id="PRO_0000280989" description="Putative polysaccharide ligase RBE_0399">
    <location>
        <begin position="1"/>
        <end position="408"/>
    </location>
</feature>
<feature type="transmembrane region" description="Helical" evidence="1">
    <location>
        <begin position="5"/>
        <end position="25"/>
    </location>
</feature>
<feature type="transmembrane region" description="Helical" evidence="1">
    <location>
        <begin position="72"/>
        <end position="92"/>
    </location>
</feature>
<feature type="transmembrane region" description="Helical" evidence="1">
    <location>
        <begin position="94"/>
        <end position="114"/>
    </location>
</feature>
<feature type="transmembrane region" description="Helical" evidence="1">
    <location>
        <begin position="130"/>
        <end position="150"/>
    </location>
</feature>
<feature type="transmembrane region" description="Helical" evidence="1">
    <location>
        <begin position="163"/>
        <end position="183"/>
    </location>
</feature>
<feature type="transmembrane region" description="Helical" evidence="1">
    <location>
        <begin position="192"/>
        <end position="212"/>
    </location>
</feature>
<feature type="transmembrane region" description="Helical" evidence="1">
    <location>
        <begin position="230"/>
        <end position="250"/>
    </location>
</feature>
<feature type="transmembrane region" description="Helical" evidence="1">
    <location>
        <begin position="325"/>
        <end position="345"/>
    </location>
</feature>
<feature type="transmembrane region" description="Helical" evidence="1">
    <location>
        <begin position="359"/>
        <end position="377"/>
    </location>
</feature>
<feature type="transmembrane region" description="Helical" evidence="1">
    <location>
        <begin position="380"/>
        <end position="400"/>
    </location>
</feature>
<name>Y399_RICBR</name>
<organism>
    <name type="scientific">Rickettsia bellii (strain RML369-C)</name>
    <dbReference type="NCBI Taxonomy" id="336407"/>
    <lineage>
        <taxon>Bacteria</taxon>
        <taxon>Pseudomonadati</taxon>
        <taxon>Pseudomonadota</taxon>
        <taxon>Alphaproteobacteria</taxon>
        <taxon>Rickettsiales</taxon>
        <taxon>Rickettsiaceae</taxon>
        <taxon>Rickettsieae</taxon>
        <taxon>Rickettsia</taxon>
        <taxon>belli group</taxon>
    </lineage>
</organism>
<keyword id="KW-0472">Membrane</keyword>
<keyword id="KW-0812">Transmembrane</keyword>
<keyword id="KW-1133">Transmembrane helix</keyword>
<evidence type="ECO:0000255" key="1"/>
<evidence type="ECO:0000305" key="2"/>
<comment type="subcellular location">
    <subcellularLocation>
        <location evidence="2">Membrane</location>
        <topology evidence="2">Multi-pass membrane protein</topology>
    </subcellularLocation>
</comment>
<comment type="similarity">
    <text evidence="2">Belongs to the O-antigen ligase family.</text>
</comment>
<sequence>MINYFFIFLVPSLGMVAGLSVAATVTVFLLISLLQNIAAWIPNRHCEEQSDVAISLNILRLLRQLFCNFLAMTIKTELLFAGWCLISCLFAIKPINSLINFVQVFTILFLGFVVSNFKPFQNRPKLKKALIFGTLTGILLFFVEYFSYGFLTRIFKANFNLYMLDRGCALLSITAWVVIAILIYDKKYCPALILYILVLYLLSISDSLASFLGFSLGGIVFILARFIKPIFSKLIIFGLITGSLLFPIIAGQINPKGLSDKYLTTHPSAAHRLFIWHFVANKIAEKPLMINGFNSSKYTQVKDSEMIDYKGEKWHPLPLHPHNNILQITLELGLIGLALFLSLVYKYLKQIGNIGNDNFRASSYACFINYYIIGMISYNVWQIWWIASSIWVLILMKLLVKPDIVIDK</sequence>
<reference key="1">
    <citation type="journal article" date="2006" name="PLoS Genet.">
        <title>Genome sequence of Rickettsia bellii illuminates the role of amoebae in gene exchanges between intracellular pathogens.</title>
        <authorList>
            <person name="Ogata H."/>
            <person name="La Scola B."/>
            <person name="Audic S."/>
            <person name="Renesto P."/>
            <person name="Blanc G."/>
            <person name="Robert C."/>
            <person name="Fournier P.-E."/>
            <person name="Claverie J.-M."/>
            <person name="Raoult D."/>
        </authorList>
    </citation>
    <scope>NUCLEOTIDE SEQUENCE [LARGE SCALE GENOMIC DNA]</scope>
    <source>
        <strain>RML369-C</strain>
    </source>
</reference>
<accession>Q1RJI4</accession>
<dbReference type="EMBL" id="CP000087">
    <property type="protein sequence ID" value="ABE04480.1"/>
    <property type="molecule type" value="Genomic_DNA"/>
</dbReference>
<dbReference type="RefSeq" id="WP_011477089.1">
    <property type="nucleotide sequence ID" value="NC_007940.1"/>
</dbReference>
<dbReference type="KEGG" id="rbe:RBE_0399"/>
<dbReference type="eggNOG" id="COG3307">
    <property type="taxonomic scope" value="Bacteria"/>
</dbReference>
<dbReference type="HOGENOM" id="CLU_668825_0_0_5"/>
<dbReference type="OrthoDB" id="8050531at2"/>
<dbReference type="Proteomes" id="UP000001951">
    <property type="component" value="Chromosome"/>
</dbReference>
<dbReference type="GO" id="GO:0016020">
    <property type="term" value="C:membrane"/>
    <property type="evidence" value="ECO:0007669"/>
    <property type="project" value="UniProtKB-SubCell"/>
</dbReference>
<dbReference type="InterPro" id="IPR007016">
    <property type="entry name" value="O-antigen_ligase-rel_domated"/>
</dbReference>
<dbReference type="InterPro" id="IPR051533">
    <property type="entry name" value="WaaL-like"/>
</dbReference>
<dbReference type="PANTHER" id="PTHR37422:SF13">
    <property type="entry name" value="LIPOPOLYSACCHARIDE BIOSYNTHESIS PROTEIN PA4999-RELATED"/>
    <property type="match status" value="1"/>
</dbReference>
<dbReference type="PANTHER" id="PTHR37422">
    <property type="entry name" value="TEICHURONIC ACID BIOSYNTHESIS PROTEIN TUAE"/>
    <property type="match status" value="1"/>
</dbReference>
<dbReference type="Pfam" id="PF04932">
    <property type="entry name" value="Wzy_C"/>
    <property type="match status" value="1"/>
</dbReference>